<dbReference type="EC" id="3.1.26.4" evidence="1"/>
<dbReference type="EMBL" id="BX294151">
    <property type="protein sequence ID" value="CAD78797.1"/>
    <property type="molecule type" value="Genomic_DNA"/>
</dbReference>
<dbReference type="RefSeq" id="NP_869340.1">
    <property type="nucleotide sequence ID" value="NC_005027.1"/>
</dbReference>
<dbReference type="RefSeq" id="WP_007326294.1">
    <property type="nucleotide sequence ID" value="NC_005027.1"/>
</dbReference>
<dbReference type="SMR" id="Q7UF86"/>
<dbReference type="FunCoup" id="Q7UF86">
    <property type="interactions" value="213"/>
</dbReference>
<dbReference type="STRING" id="243090.RB10271"/>
<dbReference type="EnsemblBacteria" id="CAD78797">
    <property type="protein sequence ID" value="CAD78797"/>
    <property type="gene ID" value="RB10271"/>
</dbReference>
<dbReference type="KEGG" id="rba:RB10271"/>
<dbReference type="PATRIC" id="fig|243090.15.peg.4966"/>
<dbReference type="eggNOG" id="COG0328">
    <property type="taxonomic scope" value="Bacteria"/>
</dbReference>
<dbReference type="HOGENOM" id="CLU_030894_6_0_0"/>
<dbReference type="InParanoid" id="Q7UF86"/>
<dbReference type="OrthoDB" id="7845843at2"/>
<dbReference type="Proteomes" id="UP000001025">
    <property type="component" value="Chromosome"/>
</dbReference>
<dbReference type="GO" id="GO:0005737">
    <property type="term" value="C:cytoplasm"/>
    <property type="evidence" value="ECO:0007669"/>
    <property type="project" value="UniProtKB-SubCell"/>
</dbReference>
<dbReference type="GO" id="GO:0000287">
    <property type="term" value="F:magnesium ion binding"/>
    <property type="evidence" value="ECO:0007669"/>
    <property type="project" value="UniProtKB-UniRule"/>
</dbReference>
<dbReference type="GO" id="GO:0003676">
    <property type="term" value="F:nucleic acid binding"/>
    <property type="evidence" value="ECO:0007669"/>
    <property type="project" value="InterPro"/>
</dbReference>
<dbReference type="GO" id="GO:0004523">
    <property type="term" value="F:RNA-DNA hybrid ribonuclease activity"/>
    <property type="evidence" value="ECO:0000318"/>
    <property type="project" value="GO_Central"/>
</dbReference>
<dbReference type="GO" id="GO:0043137">
    <property type="term" value="P:DNA replication, removal of RNA primer"/>
    <property type="evidence" value="ECO:0000318"/>
    <property type="project" value="GO_Central"/>
</dbReference>
<dbReference type="CDD" id="cd09278">
    <property type="entry name" value="RNase_HI_prokaryote_like"/>
    <property type="match status" value="1"/>
</dbReference>
<dbReference type="FunFam" id="3.30.420.10:FF:000292">
    <property type="entry name" value="Ribonuclease H"/>
    <property type="match status" value="1"/>
</dbReference>
<dbReference type="Gene3D" id="3.30.420.10">
    <property type="entry name" value="Ribonuclease H-like superfamily/Ribonuclease H"/>
    <property type="match status" value="1"/>
</dbReference>
<dbReference type="HAMAP" id="MF_00042">
    <property type="entry name" value="RNase_H"/>
    <property type="match status" value="1"/>
</dbReference>
<dbReference type="InterPro" id="IPR050092">
    <property type="entry name" value="RNase_H"/>
</dbReference>
<dbReference type="InterPro" id="IPR012337">
    <property type="entry name" value="RNaseH-like_sf"/>
</dbReference>
<dbReference type="InterPro" id="IPR002156">
    <property type="entry name" value="RNaseH_domain"/>
</dbReference>
<dbReference type="InterPro" id="IPR036397">
    <property type="entry name" value="RNaseH_sf"/>
</dbReference>
<dbReference type="InterPro" id="IPR022892">
    <property type="entry name" value="RNaseHI"/>
</dbReference>
<dbReference type="NCBIfam" id="NF001236">
    <property type="entry name" value="PRK00203.1"/>
    <property type="match status" value="1"/>
</dbReference>
<dbReference type="PANTHER" id="PTHR10642">
    <property type="entry name" value="RIBONUCLEASE H1"/>
    <property type="match status" value="1"/>
</dbReference>
<dbReference type="PANTHER" id="PTHR10642:SF26">
    <property type="entry name" value="RIBONUCLEASE H1"/>
    <property type="match status" value="1"/>
</dbReference>
<dbReference type="Pfam" id="PF00075">
    <property type="entry name" value="RNase_H"/>
    <property type="match status" value="1"/>
</dbReference>
<dbReference type="SUPFAM" id="SSF53098">
    <property type="entry name" value="Ribonuclease H-like"/>
    <property type="match status" value="1"/>
</dbReference>
<dbReference type="PROSITE" id="PS50879">
    <property type="entry name" value="RNASE_H_1"/>
    <property type="match status" value="1"/>
</dbReference>
<evidence type="ECO:0000255" key="1">
    <source>
        <dbReference type="HAMAP-Rule" id="MF_00042"/>
    </source>
</evidence>
<evidence type="ECO:0000255" key="2">
    <source>
        <dbReference type="PROSITE-ProRule" id="PRU00408"/>
    </source>
</evidence>
<name>RNH_RHOBA</name>
<gene>
    <name evidence="1" type="primary">rnhA</name>
    <name type="synonym">rnh</name>
    <name type="ordered locus">RB10271</name>
</gene>
<reference key="1">
    <citation type="journal article" date="2003" name="Proc. Natl. Acad. Sci. U.S.A.">
        <title>Complete genome sequence of the marine planctomycete Pirellula sp. strain 1.</title>
        <authorList>
            <person name="Gloeckner F.O."/>
            <person name="Kube M."/>
            <person name="Bauer M."/>
            <person name="Teeling H."/>
            <person name="Lombardot T."/>
            <person name="Ludwig W."/>
            <person name="Gade D."/>
            <person name="Beck A."/>
            <person name="Borzym K."/>
            <person name="Heitmann K."/>
            <person name="Rabus R."/>
            <person name="Schlesner H."/>
            <person name="Amann R."/>
            <person name="Reinhardt R."/>
        </authorList>
    </citation>
    <scope>NUCLEOTIDE SEQUENCE [LARGE SCALE GENOMIC DNA]</scope>
    <source>
        <strain>DSM 10527 / NCIMB 13988 / SH1</strain>
    </source>
</reference>
<organism>
    <name type="scientific">Rhodopirellula baltica (strain DSM 10527 / NCIMB 13988 / SH1)</name>
    <dbReference type="NCBI Taxonomy" id="243090"/>
    <lineage>
        <taxon>Bacteria</taxon>
        <taxon>Pseudomonadati</taxon>
        <taxon>Planctomycetota</taxon>
        <taxon>Planctomycetia</taxon>
        <taxon>Pirellulales</taxon>
        <taxon>Pirellulaceae</taxon>
        <taxon>Rhodopirellula</taxon>
    </lineage>
</organism>
<protein>
    <recommendedName>
        <fullName evidence="1">Ribonuclease H</fullName>
        <shortName evidence="1">RNase H</shortName>
        <ecNumber evidence="1">3.1.26.4</ecNumber>
    </recommendedName>
</protein>
<keyword id="KW-0963">Cytoplasm</keyword>
<keyword id="KW-0255">Endonuclease</keyword>
<keyword id="KW-0378">Hydrolase</keyword>
<keyword id="KW-0460">Magnesium</keyword>
<keyword id="KW-0479">Metal-binding</keyword>
<keyword id="KW-0540">Nuclease</keyword>
<keyword id="KW-1185">Reference proteome</keyword>
<accession>Q7UF86</accession>
<sequence length="158" mass="17665">MTDSKTEAAFKPVELYTDGACSGNPGPGGWAFVLRCPRTLKEIQRSGGQPHTTNNQMELMAVIRGLEALKEPCAVDLYSDSKYVGQGMSSWMAGWKSRGWKRKDGSKLVPVKNVELWQELDQQMQAHRVTYHHVKGHAGHTENELCDKLAVAAYQQYL</sequence>
<proteinExistence type="inferred from homology"/>
<feature type="chain" id="PRO_0000195395" description="Ribonuclease H">
    <location>
        <begin position="1"/>
        <end position="158"/>
    </location>
</feature>
<feature type="domain" description="RNase H type-1" evidence="2">
    <location>
        <begin position="9"/>
        <end position="155"/>
    </location>
</feature>
<feature type="binding site" evidence="1">
    <location>
        <position position="18"/>
    </location>
    <ligand>
        <name>Mg(2+)</name>
        <dbReference type="ChEBI" id="CHEBI:18420"/>
        <label>1</label>
    </ligand>
</feature>
<feature type="binding site" evidence="1">
    <location>
        <position position="18"/>
    </location>
    <ligand>
        <name>Mg(2+)</name>
        <dbReference type="ChEBI" id="CHEBI:18420"/>
        <label>2</label>
    </ligand>
</feature>
<feature type="binding site" evidence="1">
    <location>
        <position position="58"/>
    </location>
    <ligand>
        <name>Mg(2+)</name>
        <dbReference type="ChEBI" id="CHEBI:18420"/>
        <label>1</label>
    </ligand>
</feature>
<feature type="binding site" evidence="1">
    <location>
        <position position="80"/>
    </location>
    <ligand>
        <name>Mg(2+)</name>
        <dbReference type="ChEBI" id="CHEBI:18420"/>
        <label>1</label>
    </ligand>
</feature>
<feature type="binding site" evidence="1">
    <location>
        <position position="147"/>
    </location>
    <ligand>
        <name>Mg(2+)</name>
        <dbReference type="ChEBI" id="CHEBI:18420"/>
        <label>2</label>
    </ligand>
</feature>
<comment type="function">
    <text evidence="1">Endonuclease that specifically degrades the RNA of RNA-DNA hybrids.</text>
</comment>
<comment type="catalytic activity">
    <reaction evidence="1">
        <text>Endonucleolytic cleavage to 5'-phosphomonoester.</text>
        <dbReference type="EC" id="3.1.26.4"/>
    </reaction>
</comment>
<comment type="cofactor">
    <cofactor evidence="1">
        <name>Mg(2+)</name>
        <dbReference type="ChEBI" id="CHEBI:18420"/>
    </cofactor>
    <text evidence="1">Binds 1 Mg(2+) ion per subunit. May bind a second metal ion at a regulatory site, or after substrate binding.</text>
</comment>
<comment type="subunit">
    <text evidence="1">Monomer.</text>
</comment>
<comment type="subcellular location">
    <subcellularLocation>
        <location evidence="1">Cytoplasm</location>
    </subcellularLocation>
</comment>
<comment type="similarity">
    <text evidence="1">Belongs to the RNase H family.</text>
</comment>